<proteinExistence type="inferred from homology"/>
<organism>
    <name type="scientific">Pseudomonas aeruginosa (strain UCBPP-PA14)</name>
    <dbReference type="NCBI Taxonomy" id="208963"/>
    <lineage>
        <taxon>Bacteria</taxon>
        <taxon>Pseudomonadati</taxon>
        <taxon>Pseudomonadota</taxon>
        <taxon>Gammaproteobacteria</taxon>
        <taxon>Pseudomonadales</taxon>
        <taxon>Pseudomonadaceae</taxon>
        <taxon>Pseudomonas</taxon>
    </lineage>
</organism>
<reference key="1">
    <citation type="journal article" date="2006" name="Genome Biol.">
        <title>Genomic analysis reveals that Pseudomonas aeruginosa virulence is combinatorial.</title>
        <authorList>
            <person name="Lee D.G."/>
            <person name="Urbach J.M."/>
            <person name="Wu G."/>
            <person name="Liberati N.T."/>
            <person name="Feinbaum R.L."/>
            <person name="Miyata S."/>
            <person name="Diggins L.T."/>
            <person name="He J."/>
            <person name="Saucier M."/>
            <person name="Deziel E."/>
            <person name="Friedman L."/>
            <person name="Li L."/>
            <person name="Grills G."/>
            <person name="Montgomery K."/>
            <person name="Kucherlapati R."/>
            <person name="Rahme L.G."/>
            <person name="Ausubel F.M."/>
        </authorList>
    </citation>
    <scope>NUCLEOTIDE SEQUENCE [LARGE SCALE GENOMIC DNA]</scope>
    <source>
        <strain>UCBPP-PA14</strain>
    </source>
</reference>
<gene>
    <name evidence="1" type="primary">argA</name>
    <name type="ordered locus">PA14_68740</name>
</gene>
<name>ARGA_PSEAB</name>
<protein>
    <recommendedName>
        <fullName evidence="1">Amino-acid acetyltransferase</fullName>
        <ecNumber evidence="1">2.3.1.1</ecNumber>
    </recommendedName>
    <alternativeName>
        <fullName evidence="1">N-acetylglutamate synthase</fullName>
        <shortName evidence="1">AGS</shortName>
        <shortName evidence="1">NAGS</shortName>
    </alternativeName>
</protein>
<accession>Q02EG0</accession>
<evidence type="ECO:0000255" key="1">
    <source>
        <dbReference type="HAMAP-Rule" id="MF_01105"/>
    </source>
</evidence>
<comment type="catalytic activity">
    <reaction evidence="1">
        <text>L-glutamate + acetyl-CoA = N-acetyl-L-glutamate + CoA + H(+)</text>
        <dbReference type="Rhea" id="RHEA:24292"/>
        <dbReference type="ChEBI" id="CHEBI:15378"/>
        <dbReference type="ChEBI" id="CHEBI:29985"/>
        <dbReference type="ChEBI" id="CHEBI:44337"/>
        <dbReference type="ChEBI" id="CHEBI:57287"/>
        <dbReference type="ChEBI" id="CHEBI:57288"/>
        <dbReference type="EC" id="2.3.1.1"/>
    </reaction>
</comment>
<comment type="pathway">
    <text evidence="1">Amino-acid biosynthesis; L-arginine biosynthesis; N(2)-acetyl-L-ornithine from L-glutamate: step 1/4.</text>
</comment>
<comment type="subcellular location">
    <subcellularLocation>
        <location evidence="1">Cytoplasm</location>
    </subcellularLocation>
</comment>
<comment type="similarity">
    <text evidence="1">Belongs to the acetyltransferase family. ArgA subfamily.</text>
</comment>
<dbReference type="EC" id="2.3.1.1" evidence="1"/>
<dbReference type="EMBL" id="CP000438">
    <property type="protein sequence ID" value="ABJ14588.1"/>
    <property type="molecule type" value="Genomic_DNA"/>
</dbReference>
<dbReference type="RefSeq" id="WP_003096265.1">
    <property type="nucleotide sequence ID" value="NZ_CP034244.1"/>
</dbReference>
<dbReference type="SMR" id="Q02EG0"/>
<dbReference type="KEGG" id="pau:PA14_68740"/>
<dbReference type="PseudoCAP" id="PA14_68740"/>
<dbReference type="HOGENOM" id="CLU_024773_0_0_6"/>
<dbReference type="BioCyc" id="PAER208963:G1G74-5793-MONOMER"/>
<dbReference type="UniPathway" id="UPA00068">
    <property type="reaction ID" value="UER00106"/>
</dbReference>
<dbReference type="Proteomes" id="UP000000653">
    <property type="component" value="Chromosome"/>
</dbReference>
<dbReference type="GO" id="GO:0005737">
    <property type="term" value="C:cytoplasm"/>
    <property type="evidence" value="ECO:0007669"/>
    <property type="project" value="UniProtKB-SubCell"/>
</dbReference>
<dbReference type="GO" id="GO:0004042">
    <property type="term" value="F:L-glutamate N-acetyltransferase activity"/>
    <property type="evidence" value="ECO:0007669"/>
    <property type="project" value="UniProtKB-UniRule"/>
</dbReference>
<dbReference type="GO" id="GO:0006526">
    <property type="term" value="P:L-arginine biosynthetic process"/>
    <property type="evidence" value="ECO:0007669"/>
    <property type="project" value="UniProtKB-UniRule"/>
</dbReference>
<dbReference type="CDD" id="cd04237">
    <property type="entry name" value="AAK_NAGS-ABP"/>
    <property type="match status" value="1"/>
</dbReference>
<dbReference type="CDD" id="cd04301">
    <property type="entry name" value="NAT_SF"/>
    <property type="match status" value="1"/>
</dbReference>
<dbReference type="FunFam" id="3.40.1160.10:FF:000005">
    <property type="entry name" value="Amino-acid acetyltransferase"/>
    <property type="match status" value="1"/>
</dbReference>
<dbReference type="Gene3D" id="3.40.630.30">
    <property type="match status" value="1"/>
</dbReference>
<dbReference type="Gene3D" id="3.40.1160.10">
    <property type="entry name" value="Acetylglutamate kinase-like"/>
    <property type="match status" value="1"/>
</dbReference>
<dbReference type="HAMAP" id="MF_01105">
    <property type="entry name" value="N_acetyl_glu_synth"/>
    <property type="match status" value="1"/>
</dbReference>
<dbReference type="InterPro" id="IPR036393">
    <property type="entry name" value="AceGlu_kinase-like_sf"/>
</dbReference>
<dbReference type="InterPro" id="IPR016181">
    <property type="entry name" value="Acyl_CoA_acyltransferase"/>
</dbReference>
<dbReference type="InterPro" id="IPR001048">
    <property type="entry name" value="Asp/Glu/Uridylate_kinase"/>
</dbReference>
<dbReference type="InterPro" id="IPR000182">
    <property type="entry name" value="GNAT_dom"/>
</dbReference>
<dbReference type="InterPro" id="IPR033719">
    <property type="entry name" value="NAGS_kin"/>
</dbReference>
<dbReference type="InterPro" id="IPR010167">
    <property type="entry name" value="NH2A_AcTrfase"/>
</dbReference>
<dbReference type="NCBIfam" id="TIGR01890">
    <property type="entry name" value="N-Ac-Glu-synth"/>
    <property type="match status" value="1"/>
</dbReference>
<dbReference type="NCBIfam" id="NF003641">
    <property type="entry name" value="PRK05279.1"/>
    <property type="match status" value="1"/>
</dbReference>
<dbReference type="PANTHER" id="PTHR30602">
    <property type="entry name" value="AMINO-ACID ACETYLTRANSFERASE"/>
    <property type="match status" value="1"/>
</dbReference>
<dbReference type="PANTHER" id="PTHR30602:SF12">
    <property type="entry name" value="AMINO-ACID ACETYLTRANSFERASE NAGS1, CHLOROPLASTIC-RELATED"/>
    <property type="match status" value="1"/>
</dbReference>
<dbReference type="Pfam" id="PF00696">
    <property type="entry name" value="AA_kinase"/>
    <property type="match status" value="1"/>
</dbReference>
<dbReference type="Pfam" id="PF00583">
    <property type="entry name" value="Acetyltransf_1"/>
    <property type="match status" value="1"/>
</dbReference>
<dbReference type="PIRSF" id="PIRSF000423">
    <property type="entry name" value="ArgA"/>
    <property type="match status" value="1"/>
</dbReference>
<dbReference type="SUPFAM" id="SSF55729">
    <property type="entry name" value="Acyl-CoA N-acyltransferases (Nat)"/>
    <property type="match status" value="1"/>
</dbReference>
<dbReference type="SUPFAM" id="SSF53633">
    <property type="entry name" value="Carbamate kinase-like"/>
    <property type="match status" value="1"/>
</dbReference>
<dbReference type="PROSITE" id="PS51186">
    <property type="entry name" value="GNAT"/>
    <property type="match status" value="1"/>
</dbReference>
<sequence>MPDYVNWLRHASPYINSHRDRTFVVMLPGEGVEHPNFGNIVHDLVLLHSLGARLVLVHGSRPQIEARLAARGLAPRYHRDLRVTDAPTLECVIDAVGSLRIAIEARLSMDMAASPMQGARLRVAGGNLVTARPIGVVEGVDYHHTGEVRRIDRKGIGRLLDERSIVLLSPLGYSPTGEIFNLACEDVAMRAAIDLEAEKLILYGAEQGLLDASGKLVRELRPQQVPAHLQRLGNSYQAELLDAAAQACRAGVKRSHIVSYTEDGALLSELFTRTGNGTLVAQEQFEQLREAGIEDVGGLIELIRPLEEQGILVRRSREVLEREIEQFSIVEREGLIIACAALYPIADSEAGELACLAVNPEYRHGGRGDELLERIEERARGLGLKTLFVLTTRTAHWFRERGFQPSSVERLPAARASLYNFQRNSQVFEKSL</sequence>
<keyword id="KW-0012">Acyltransferase</keyword>
<keyword id="KW-0028">Amino-acid biosynthesis</keyword>
<keyword id="KW-0055">Arginine biosynthesis</keyword>
<keyword id="KW-0963">Cytoplasm</keyword>
<keyword id="KW-0808">Transferase</keyword>
<feature type="chain" id="PRO_1000084816" description="Amino-acid acetyltransferase">
    <location>
        <begin position="1"/>
        <end position="432"/>
    </location>
</feature>
<feature type="domain" description="N-acetyltransferase" evidence="1">
    <location>
        <begin position="286"/>
        <end position="425"/>
    </location>
</feature>